<accession>B5YX17</accession>
<gene>
    <name evidence="1" type="primary">ubiG</name>
    <name type="ordered locus">ECH74115_3366</name>
</gene>
<keyword id="KW-0489">Methyltransferase</keyword>
<keyword id="KW-0949">S-adenosyl-L-methionine</keyword>
<keyword id="KW-0808">Transferase</keyword>
<keyword id="KW-0831">Ubiquinone biosynthesis</keyword>
<name>UBIG_ECO5E</name>
<proteinExistence type="inferred from homology"/>
<feature type="chain" id="PRO_1000199681" description="Ubiquinone biosynthesis O-methyltransferase">
    <location>
        <begin position="1"/>
        <end position="240"/>
    </location>
</feature>
<feature type="binding site" evidence="1">
    <location>
        <position position="44"/>
    </location>
    <ligand>
        <name>S-adenosyl-L-methionine</name>
        <dbReference type="ChEBI" id="CHEBI:59789"/>
    </ligand>
</feature>
<feature type="binding site" evidence="1">
    <location>
        <position position="64"/>
    </location>
    <ligand>
        <name>S-adenosyl-L-methionine</name>
        <dbReference type="ChEBI" id="CHEBI:59789"/>
    </ligand>
</feature>
<feature type="binding site" evidence="1">
    <location>
        <position position="85"/>
    </location>
    <ligand>
        <name>S-adenosyl-L-methionine</name>
        <dbReference type="ChEBI" id="CHEBI:59789"/>
    </ligand>
</feature>
<feature type="binding site" evidence="1">
    <location>
        <position position="129"/>
    </location>
    <ligand>
        <name>S-adenosyl-L-methionine</name>
        <dbReference type="ChEBI" id="CHEBI:59789"/>
    </ligand>
</feature>
<protein>
    <recommendedName>
        <fullName evidence="1">Ubiquinone biosynthesis O-methyltransferase</fullName>
    </recommendedName>
    <alternativeName>
        <fullName evidence="1">2-octaprenyl-6-hydroxyphenol methylase</fullName>
        <ecNumber evidence="1">2.1.1.222</ecNumber>
    </alternativeName>
    <alternativeName>
        <fullName evidence="1">3-demethylubiquinone-8 3-O-methyltransferase</fullName>
        <ecNumber evidence="1">2.1.1.64</ecNumber>
    </alternativeName>
</protein>
<organism>
    <name type="scientific">Escherichia coli O157:H7 (strain EC4115 / EHEC)</name>
    <dbReference type="NCBI Taxonomy" id="444450"/>
    <lineage>
        <taxon>Bacteria</taxon>
        <taxon>Pseudomonadati</taxon>
        <taxon>Pseudomonadota</taxon>
        <taxon>Gammaproteobacteria</taxon>
        <taxon>Enterobacterales</taxon>
        <taxon>Enterobacteriaceae</taxon>
        <taxon>Escherichia</taxon>
    </lineage>
</organism>
<reference key="1">
    <citation type="journal article" date="2011" name="Proc. Natl. Acad. Sci. U.S.A.">
        <title>Genomic anatomy of Escherichia coli O157:H7 outbreaks.</title>
        <authorList>
            <person name="Eppinger M."/>
            <person name="Mammel M.K."/>
            <person name="Leclerc J.E."/>
            <person name="Ravel J."/>
            <person name="Cebula T.A."/>
        </authorList>
    </citation>
    <scope>NUCLEOTIDE SEQUENCE [LARGE SCALE GENOMIC DNA]</scope>
    <source>
        <strain>EC4115 / EHEC</strain>
    </source>
</reference>
<sequence length="240" mass="26585">MNAEKSPVNHNVDHEEIAKFEAVASRWWDLEGEFKPLHRINPLRLSYIAERAGGLFGKKVLDVGCGGGILAESMAREGATVTGLDMGFEPLQVAKLHALESGIQVDYVQETVEEHAAKHAGQYDVVTCMEMLEHVPDPQSVVRACAQLVKPGGDVFFSTLNRNGKSWLMAVVGAEYILRMVPKGTHDVKKFIKPAELLGWVDQTSLKERHITGLHYNPITNTFKLGPGVDVNYMLHTQNK</sequence>
<dbReference type="EC" id="2.1.1.222" evidence="1"/>
<dbReference type="EC" id="2.1.1.64" evidence="1"/>
<dbReference type="EMBL" id="CP001164">
    <property type="protein sequence ID" value="ACI35886.1"/>
    <property type="molecule type" value="Genomic_DNA"/>
</dbReference>
<dbReference type="RefSeq" id="WP_000990779.1">
    <property type="nucleotide sequence ID" value="NC_011353.1"/>
</dbReference>
<dbReference type="SMR" id="B5YX17"/>
<dbReference type="KEGG" id="ecf:ECH74115_3366"/>
<dbReference type="HOGENOM" id="CLU_042432_5_0_6"/>
<dbReference type="UniPathway" id="UPA00232"/>
<dbReference type="GO" id="GO:0102208">
    <property type="term" value="F:2-polyprenyl-6-hydroxyphenol methylase activity"/>
    <property type="evidence" value="ECO:0007669"/>
    <property type="project" value="UniProtKB-EC"/>
</dbReference>
<dbReference type="GO" id="GO:0061542">
    <property type="term" value="F:3-demethylubiquinol 3-O-methyltransferase activity"/>
    <property type="evidence" value="ECO:0007669"/>
    <property type="project" value="UniProtKB-UniRule"/>
</dbReference>
<dbReference type="GO" id="GO:0010420">
    <property type="term" value="F:polyprenyldihydroxybenzoate methyltransferase activity"/>
    <property type="evidence" value="ECO:0007669"/>
    <property type="project" value="InterPro"/>
</dbReference>
<dbReference type="GO" id="GO:0032259">
    <property type="term" value="P:methylation"/>
    <property type="evidence" value="ECO:0007669"/>
    <property type="project" value="UniProtKB-KW"/>
</dbReference>
<dbReference type="CDD" id="cd02440">
    <property type="entry name" value="AdoMet_MTases"/>
    <property type="match status" value="1"/>
</dbReference>
<dbReference type="FunFam" id="3.40.50.150:FF:000028">
    <property type="entry name" value="Ubiquinone biosynthesis O-methyltransferase"/>
    <property type="match status" value="1"/>
</dbReference>
<dbReference type="Gene3D" id="3.40.50.150">
    <property type="entry name" value="Vaccinia Virus protein VP39"/>
    <property type="match status" value="1"/>
</dbReference>
<dbReference type="HAMAP" id="MF_00472">
    <property type="entry name" value="UbiG"/>
    <property type="match status" value="1"/>
</dbReference>
<dbReference type="InterPro" id="IPR029063">
    <property type="entry name" value="SAM-dependent_MTases_sf"/>
</dbReference>
<dbReference type="InterPro" id="IPR010233">
    <property type="entry name" value="UbiG_MeTrfase"/>
</dbReference>
<dbReference type="NCBIfam" id="TIGR01983">
    <property type="entry name" value="UbiG"/>
    <property type="match status" value="1"/>
</dbReference>
<dbReference type="PANTHER" id="PTHR43464">
    <property type="entry name" value="METHYLTRANSFERASE"/>
    <property type="match status" value="1"/>
</dbReference>
<dbReference type="PANTHER" id="PTHR43464:SF19">
    <property type="entry name" value="UBIQUINONE BIOSYNTHESIS O-METHYLTRANSFERASE, MITOCHONDRIAL"/>
    <property type="match status" value="1"/>
</dbReference>
<dbReference type="Pfam" id="PF13489">
    <property type="entry name" value="Methyltransf_23"/>
    <property type="match status" value="1"/>
</dbReference>
<dbReference type="SUPFAM" id="SSF53335">
    <property type="entry name" value="S-adenosyl-L-methionine-dependent methyltransferases"/>
    <property type="match status" value="1"/>
</dbReference>
<comment type="function">
    <text evidence="1">O-methyltransferase that catalyzes the 2 O-methylation steps in the ubiquinone biosynthetic pathway.</text>
</comment>
<comment type="catalytic activity">
    <reaction evidence="1">
        <text>a 3-demethylubiquinol + S-adenosyl-L-methionine = a ubiquinol + S-adenosyl-L-homocysteine + H(+)</text>
        <dbReference type="Rhea" id="RHEA:44380"/>
        <dbReference type="Rhea" id="RHEA-COMP:9566"/>
        <dbReference type="Rhea" id="RHEA-COMP:10914"/>
        <dbReference type="ChEBI" id="CHEBI:15378"/>
        <dbReference type="ChEBI" id="CHEBI:17976"/>
        <dbReference type="ChEBI" id="CHEBI:57856"/>
        <dbReference type="ChEBI" id="CHEBI:59789"/>
        <dbReference type="ChEBI" id="CHEBI:84422"/>
        <dbReference type="EC" id="2.1.1.64"/>
    </reaction>
</comment>
<comment type="catalytic activity">
    <reaction evidence="1">
        <text>a 3-(all-trans-polyprenyl)benzene-1,2-diol + S-adenosyl-L-methionine = a 2-methoxy-6-(all-trans-polyprenyl)phenol + S-adenosyl-L-homocysteine + H(+)</text>
        <dbReference type="Rhea" id="RHEA:31411"/>
        <dbReference type="Rhea" id="RHEA-COMP:9550"/>
        <dbReference type="Rhea" id="RHEA-COMP:9551"/>
        <dbReference type="ChEBI" id="CHEBI:15378"/>
        <dbReference type="ChEBI" id="CHEBI:57856"/>
        <dbReference type="ChEBI" id="CHEBI:59789"/>
        <dbReference type="ChEBI" id="CHEBI:62729"/>
        <dbReference type="ChEBI" id="CHEBI:62731"/>
        <dbReference type="EC" id="2.1.1.222"/>
    </reaction>
</comment>
<comment type="pathway">
    <text evidence="1">Cofactor biosynthesis; ubiquinone biosynthesis.</text>
</comment>
<comment type="similarity">
    <text evidence="1">Belongs to the methyltransferase superfamily. UbiG/COQ3 family.</text>
</comment>
<evidence type="ECO:0000255" key="1">
    <source>
        <dbReference type="HAMAP-Rule" id="MF_00472"/>
    </source>
</evidence>